<evidence type="ECO:0000255" key="1">
    <source>
        <dbReference type="PROSITE-ProRule" id="PRU00169"/>
    </source>
</evidence>
<evidence type="ECO:0000255" key="2">
    <source>
        <dbReference type="PROSITE-ProRule" id="PRU01091"/>
    </source>
</evidence>
<evidence type="ECO:0000305" key="3"/>
<reference key="1">
    <citation type="journal article" date="1987" name="Mol. Microbiol.">
        <title>Nucleotide sequence of the virG locus of the Agrobacterium tumefaciens plasmid pTiC58.</title>
        <authorList>
            <person name="Powell B.S."/>
            <person name="Powell G.K."/>
            <person name="Morris R.O."/>
            <person name="Rogowsky P.M."/>
            <person name="Kado C.I."/>
        </authorList>
    </citation>
    <scope>NUCLEOTIDE SEQUENCE [GENOMIC DNA]</scope>
</reference>
<reference key="2">
    <citation type="journal article" date="1990" name="Plasmid">
        <title>Molecular characterization of the vir regulon of Agrobacterium tumefaciens: complete nucleotide sequence and gene organization of the 28.63-kbp regulon cloned as a single unit.</title>
        <authorList>
            <person name="Rogowsky P.M."/>
            <person name="Powell B.S."/>
            <person name="Shirasu K."/>
            <person name="Lin T.-S."/>
            <person name="Morel P."/>
            <person name="Zyprian E.M."/>
            <person name="Steck T.R."/>
            <person name="Kado C.I."/>
        </authorList>
    </citation>
    <scope>NUCLEOTIDE SEQUENCE [GENOMIC DNA]</scope>
</reference>
<reference key="3">
    <citation type="journal article" date="1995" name="J. Bacteriol.">
        <title>Genetic analysis of nonpathogenic Agrobacterium tumefaciens mutants arising in crown gall tumors.</title>
        <authorList>
            <person name="Belanger C."/>
            <person name="Canfield M.L."/>
            <person name="Moore L.W."/>
            <person name="Dion P."/>
        </authorList>
    </citation>
    <scope>NUCLEOTIDE SEQUENCE [GENOMIC DNA]</scope>
    <source>
        <strain>D10B/87</strain>
    </source>
</reference>
<reference key="4">
    <citation type="journal article" date="2001" name="Science">
        <title>The genome of the natural genetic engineer Agrobacterium tumefaciens C58.</title>
        <authorList>
            <person name="Wood D.W."/>
            <person name="Setubal J.C."/>
            <person name="Kaul R."/>
            <person name="Monks D.E."/>
            <person name="Kitajima J.P."/>
            <person name="Okura V.K."/>
            <person name="Zhou Y."/>
            <person name="Chen L."/>
            <person name="Wood G.E."/>
            <person name="Almeida N.F. Jr."/>
            <person name="Woo L."/>
            <person name="Chen Y."/>
            <person name="Paulsen I.T."/>
            <person name="Eisen J.A."/>
            <person name="Karp P.D."/>
            <person name="Bovee D. Sr."/>
            <person name="Chapman P."/>
            <person name="Clendenning J."/>
            <person name="Deatherage G."/>
            <person name="Gillet W."/>
            <person name="Grant C."/>
            <person name="Kutyavin T."/>
            <person name="Levy R."/>
            <person name="Li M.-J."/>
            <person name="McClelland E."/>
            <person name="Palmieri A."/>
            <person name="Raymond C."/>
            <person name="Rouse G."/>
            <person name="Saenphimmachak C."/>
            <person name="Wu Z."/>
            <person name="Romero P."/>
            <person name="Gordon D."/>
            <person name="Zhang S."/>
            <person name="Yoo H."/>
            <person name="Tao Y."/>
            <person name="Biddle P."/>
            <person name="Jung M."/>
            <person name="Krespan W."/>
            <person name="Perry M."/>
            <person name="Gordon-Kamm B."/>
            <person name="Liao L."/>
            <person name="Kim S."/>
            <person name="Hendrick C."/>
            <person name="Zhao Z.-Y."/>
            <person name="Dolan M."/>
            <person name="Chumley F."/>
            <person name="Tingey S.V."/>
            <person name="Tomb J.-F."/>
            <person name="Gordon M.P."/>
            <person name="Olson M.V."/>
            <person name="Nester E.W."/>
        </authorList>
    </citation>
    <scope>NUCLEOTIDE SEQUENCE [LARGE SCALE GENOMIC DNA]</scope>
</reference>
<reference key="5">
    <citation type="journal article" date="2001" name="Science">
        <title>Genome sequence of the plant pathogen and biotechnology agent Agrobacterium tumefaciens C58.</title>
        <authorList>
            <person name="Goodner B."/>
            <person name="Hinkle G."/>
            <person name="Gattung S."/>
            <person name="Miller N."/>
            <person name="Blanchard M."/>
            <person name="Qurollo B."/>
            <person name="Goldman B.S."/>
            <person name="Cao Y."/>
            <person name="Askenazi M."/>
            <person name="Halling C."/>
            <person name="Mullin L."/>
            <person name="Houmiel K."/>
            <person name="Gordon J."/>
            <person name="Vaudin M."/>
            <person name="Iartchouk O."/>
            <person name="Epp A."/>
            <person name="Liu F."/>
            <person name="Wollam C."/>
            <person name="Allinger M."/>
            <person name="Doughty D."/>
            <person name="Scott C."/>
            <person name="Lappas C."/>
            <person name="Markelz B."/>
            <person name="Flanagan C."/>
            <person name="Crowell C."/>
            <person name="Gurson J."/>
            <person name="Lomo C."/>
            <person name="Sear C."/>
            <person name="Strub G."/>
            <person name="Cielo C."/>
            <person name="Slater S."/>
        </authorList>
    </citation>
    <scope>NUCLEOTIDE SEQUENCE [LARGE SCALE GENOMIC DNA]</scope>
    <source>
        <strain>C58 / ATCC 33970</strain>
    </source>
</reference>
<sequence length="253" mass="28416">MAGQDPRLRGEPLKHVLVIDDDVAMRHLIVEYLTIHAFKVTAVADSKQFNRVLCSETVDVVVVDLNLGREDGLEIVRSLATKSDVPIIIISGARLEEADKVIALELGATDFIAKPFGTREFLARIRVALRVRPSVARTKDRRSFSFADWTLNLRRRRLISEEGSEVKLTAGEFNLLVAFLEKPRDVLSREQLLIASRVREEEVYDRSIDVLILRLRRKLEGDPTTPQLIKTARGAGYFFDADVDVSYGGVMAA</sequence>
<geneLocation type="plasmid">
    <name>pTiC58</name>
</geneLocation>
<proteinExistence type="inferred from homology"/>
<name>VIRG_AGRFC</name>
<keyword id="KW-0010">Activator</keyword>
<keyword id="KW-0192">Crown gall tumor</keyword>
<keyword id="KW-0963">Cytoplasm</keyword>
<keyword id="KW-0238">DNA-binding</keyword>
<keyword id="KW-0597">Phosphoprotein</keyword>
<keyword id="KW-0614">Plasmid</keyword>
<keyword id="KW-1185">Reference proteome</keyword>
<keyword id="KW-0804">Transcription</keyword>
<keyword id="KW-0805">Transcription regulation</keyword>
<keyword id="KW-0902">Two-component regulatory system</keyword>
<feature type="chain" id="PRO_0000081265" description="Regulatory protein VirG">
    <location>
        <begin position="1"/>
        <end position="253"/>
    </location>
</feature>
<feature type="domain" description="Response regulatory" evidence="1">
    <location>
        <begin position="15"/>
        <end position="129"/>
    </location>
</feature>
<feature type="DNA-binding region" description="OmpR/PhoB-type" evidence="2">
    <location>
        <begin position="141"/>
        <end position="241"/>
    </location>
</feature>
<feature type="modified residue" description="4-aspartylphosphate" evidence="1">
    <location>
        <position position="64"/>
    </location>
</feature>
<protein>
    <recommendedName>
        <fullName>Regulatory protein VirG</fullName>
    </recommendedName>
</protein>
<gene>
    <name type="primary">virG</name>
    <name type="ordered locus">Atu6178</name>
    <name type="ORF">AGR_pTi_15</name>
</gene>
<organism>
    <name type="scientific">Agrobacterium fabrum (strain C58 / ATCC 33970)</name>
    <name type="common">Agrobacterium tumefaciens (strain C58)</name>
    <dbReference type="NCBI Taxonomy" id="176299"/>
    <lineage>
        <taxon>Bacteria</taxon>
        <taxon>Pseudomonadati</taxon>
        <taxon>Pseudomonadota</taxon>
        <taxon>Alphaproteobacteria</taxon>
        <taxon>Hyphomicrobiales</taxon>
        <taxon>Rhizobiaceae</taxon>
        <taxon>Rhizobium/Agrobacterium group</taxon>
        <taxon>Agrobacterium</taxon>
        <taxon>Agrobacterium tumefaciens complex</taxon>
    </lineage>
</organism>
<dbReference type="EMBL" id="M36786">
    <property type="protein sequence ID" value="AAD15211.1"/>
    <property type="molecule type" value="Genomic_DNA"/>
</dbReference>
<dbReference type="EMBL" id="Y00535">
    <property type="protein sequence ID" value="CAA68595.1"/>
    <property type="molecule type" value="Genomic_DNA"/>
</dbReference>
<dbReference type="EMBL" id="J03320">
    <property type="protein sequence ID" value="AAA91602.1"/>
    <property type="status" value="ALT_INIT"/>
    <property type="molecule type" value="Genomic_DNA"/>
</dbReference>
<dbReference type="EMBL" id="U16142">
    <property type="protein sequence ID" value="AAA86981.1"/>
    <property type="status" value="ALT_INIT"/>
    <property type="molecule type" value="Genomic_DNA"/>
</dbReference>
<dbReference type="EMBL" id="AE007871">
    <property type="protein sequence ID" value="AAK90940.1"/>
    <property type="molecule type" value="Genomic_DNA"/>
</dbReference>
<dbReference type="PIR" id="AH3249">
    <property type="entry name" value="AH3249"/>
</dbReference>
<dbReference type="PIR" id="S03760">
    <property type="entry name" value="S03760"/>
</dbReference>
<dbReference type="RefSeq" id="NP_396499.1">
    <property type="nucleotide sequence ID" value="NC_003065.3"/>
</dbReference>
<dbReference type="RefSeq" id="WP_010891492.1">
    <property type="nucleotide sequence ID" value="NC_003065.3"/>
</dbReference>
<dbReference type="SMR" id="P07545"/>
<dbReference type="IntAct" id="P07545">
    <property type="interactions" value="2"/>
</dbReference>
<dbReference type="EnsemblBacteria" id="AAK90940">
    <property type="protein sequence ID" value="AAK90940"/>
    <property type="gene ID" value="Atu6178"/>
</dbReference>
<dbReference type="GeneID" id="86882433"/>
<dbReference type="GeneID" id="92775045"/>
<dbReference type="KEGG" id="atu:Atu6178"/>
<dbReference type="PATRIC" id="fig|176299.10.peg.5372"/>
<dbReference type="HOGENOM" id="CLU_000445_30_4_5"/>
<dbReference type="OrthoDB" id="9802426at2"/>
<dbReference type="PhylomeDB" id="P07545"/>
<dbReference type="BioCyc" id="AGRO:ATU6178-MONOMER"/>
<dbReference type="Proteomes" id="UP000000813">
    <property type="component" value="Plasmid Ti"/>
</dbReference>
<dbReference type="GO" id="GO:0005829">
    <property type="term" value="C:cytosol"/>
    <property type="evidence" value="ECO:0007669"/>
    <property type="project" value="TreeGrafter"/>
</dbReference>
<dbReference type="GO" id="GO:0032993">
    <property type="term" value="C:protein-DNA complex"/>
    <property type="evidence" value="ECO:0007669"/>
    <property type="project" value="TreeGrafter"/>
</dbReference>
<dbReference type="GO" id="GO:0000156">
    <property type="term" value="F:phosphorelay response regulator activity"/>
    <property type="evidence" value="ECO:0000304"/>
    <property type="project" value="PAMGO_GAT"/>
</dbReference>
<dbReference type="GO" id="GO:0000976">
    <property type="term" value="F:transcription cis-regulatory region binding"/>
    <property type="evidence" value="ECO:0007669"/>
    <property type="project" value="TreeGrafter"/>
</dbReference>
<dbReference type="GO" id="GO:0006355">
    <property type="term" value="P:regulation of DNA-templated transcription"/>
    <property type="evidence" value="ECO:0007669"/>
    <property type="project" value="InterPro"/>
</dbReference>
<dbReference type="CDD" id="cd17594">
    <property type="entry name" value="REC_OmpR_VirG"/>
    <property type="match status" value="1"/>
</dbReference>
<dbReference type="CDD" id="cd00383">
    <property type="entry name" value="trans_reg_C"/>
    <property type="match status" value="1"/>
</dbReference>
<dbReference type="FunFam" id="3.40.50.2300:FF:000394">
    <property type="entry name" value="DNA-binding response regulator"/>
    <property type="match status" value="1"/>
</dbReference>
<dbReference type="FunFam" id="1.10.10.10:FF:000099">
    <property type="entry name" value="Two-component system response regulator TorR"/>
    <property type="match status" value="1"/>
</dbReference>
<dbReference type="Gene3D" id="3.40.50.2300">
    <property type="match status" value="1"/>
</dbReference>
<dbReference type="Gene3D" id="6.10.250.690">
    <property type="match status" value="1"/>
</dbReference>
<dbReference type="Gene3D" id="1.10.10.10">
    <property type="entry name" value="Winged helix-like DNA-binding domain superfamily/Winged helix DNA-binding domain"/>
    <property type="match status" value="1"/>
</dbReference>
<dbReference type="InterPro" id="IPR011006">
    <property type="entry name" value="CheY-like_superfamily"/>
</dbReference>
<dbReference type="InterPro" id="IPR001867">
    <property type="entry name" value="OmpR/PhoB-type_DNA-bd"/>
</dbReference>
<dbReference type="InterPro" id="IPR016032">
    <property type="entry name" value="Sig_transdc_resp-reg_C-effctor"/>
</dbReference>
<dbReference type="InterPro" id="IPR001789">
    <property type="entry name" value="Sig_transdc_resp-reg_receiver"/>
</dbReference>
<dbReference type="InterPro" id="IPR039420">
    <property type="entry name" value="WalR-like"/>
</dbReference>
<dbReference type="InterPro" id="IPR036388">
    <property type="entry name" value="WH-like_DNA-bd_sf"/>
</dbReference>
<dbReference type="NCBIfam" id="NF010430">
    <property type="entry name" value="PRK13856.1"/>
    <property type="match status" value="1"/>
</dbReference>
<dbReference type="PANTHER" id="PTHR48111:SF4">
    <property type="entry name" value="DNA-BINDING DUAL TRANSCRIPTIONAL REGULATOR OMPR"/>
    <property type="match status" value="1"/>
</dbReference>
<dbReference type="PANTHER" id="PTHR48111">
    <property type="entry name" value="REGULATOR OF RPOS"/>
    <property type="match status" value="1"/>
</dbReference>
<dbReference type="Pfam" id="PF00072">
    <property type="entry name" value="Response_reg"/>
    <property type="match status" value="1"/>
</dbReference>
<dbReference type="Pfam" id="PF00486">
    <property type="entry name" value="Trans_reg_C"/>
    <property type="match status" value="1"/>
</dbReference>
<dbReference type="SMART" id="SM00448">
    <property type="entry name" value="REC"/>
    <property type="match status" value="1"/>
</dbReference>
<dbReference type="SMART" id="SM00862">
    <property type="entry name" value="Trans_reg_C"/>
    <property type="match status" value="1"/>
</dbReference>
<dbReference type="SUPFAM" id="SSF46894">
    <property type="entry name" value="C-terminal effector domain of the bipartite response regulators"/>
    <property type="match status" value="1"/>
</dbReference>
<dbReference type="SUPFAM" id="SSF52172">
    <property type="entry name" value="CheY-like"/>
    <property type="match status" value="1"/>
</dbReference>
<dbReference type="PROSITE" id="PS51755">
    <property type="entry name" value="OMPR_PHOB"/>
    <property type="match status" value="1"/>
</dbReference>
<dbReference type="PROSITE" id="PS50110">
    <property type="entry name" value="RESPONSE_REGULATORY"/>
    <property type="match status" value="1"/>
</dbReference>
<accession>P07545</accession>
<comment type="function">
    <text>VirG is required for the positive regulation of at least two vir loci encoded by the Ti plasmid of A.tumefaciens.</text>
</comment>
<comment type="subcellular location">
    <subcellularLocation>
        <location>Cytoplasm</location>
    </subcellularLocation>
</comment>
<comment type="PTM">
    <text>Phosphorylated by wide host range (WHR) VirA protein.</text>
</comment>
<comment type="sequence caution" evidence="3">
    <conflict type="erroneous initiation">
        <sequence resource="EMBL-CDS" id="AAA86981"/>
    </conflict>
</comment>
<comment type="sequence caution" evidence="3">
    <conflict type="erroneous initiation">
        <sequence resource="EMBL-CDS" id="AAA91602"/>
    </conflict>
</comment>